<reference key="1">
    <citation type="journal article" date="2003" name="Lancet">
        <title>Sequencing and analysis of the genome of the Whipple's disease bacterium Tropheryma whipplei.</title>
        <authorList>
            <person name="Bentley S.D."/>
            <person name="Maiwald M."/>
            <person name="Murphy L.D."/>
            <person name="Pallen M.J."/>
            <person name="Yeats C.A."/>
            <person name="Dover L.G."/>
            <person name="Norbertczak H.T."/>
            <person name="Besra G.S."/>
            <person name="Quail M.A."/>
            <person name="Harris D.E."/>
            <person name="von Herbay A."/>
            <person name="Goble A."/>
            <person name="Rutter S."/>
            <person name="Squares R."/>
            <person name="Squares S."/>
            <person name="Barrell B.G."/>
            <person name="Parkhill J."/>
            <person name="Relman D.A."/>
        </authorList>
    </citation>
    <scope>NUCLEOTIDE SEQUENCE [LARGE SCALE GENOMIC DNA]</scope>
    <source>
        <strain>TW08/27</strain>
    </source>
</reference>
<dbReference type="EMBL" id="BX251410">
    <property type="protein sequence ID" value="CAD66807.1"/>
    <property type="molecule type" value="Genomic_DNA"/>
</dbReference>
<dbReference type="RefSeq" id="WP_011096088.1">
    <property type="nucleotide sequence ID" value="NC_004551.1"/>
</dbReference>
<dbReference type="SMR" id="Q83IB4"/>
<dbReference type="GeneID" id="67387899"/>
<dbReference type="KEGG" id="tws:TW127"/>
<dbReference type="HOGENOM" id="CLU_139869_0_1_11"/>
<dbReference type="GO" id="GO:0015935">
    <property type="term" value="C:small ribosomal subunit"/>
    <property type="evidence" value="ECO:0007669"/>
    <property type="project" value="TreeGrafter"/>
</dbReference>
<dbReference type="GO" id="GO:0019843">
    <property type="term" value="F:rRNA binding"/>
    <property type="evidence" value="ECO:0007669"/>
    <property type="project" value="UniProtKB-UniRule"/>
</dbReference>
<dbReference type="GO" id="GO:0003735">
    <property type="term" value="F:structural constituent of ribosome"/>
    <property type="evidence" value="ECO:0007669"/>
    <property type="project" value="InterPro"/>
</dbReference>
<dbReference type="GO" id="GO:0006412">
    <property type="term" value="P:translation"/>
    <property type="evidence" value="ECO:0007669"/>
    <property type="project" value="UniProtKB-UniRule"/>
</dbReference>
<dbReference type="FunFam" id="1.10.287.1480:FF:000001">
    <property type="entry name" value="30S ribosomal protein S14"/>
    <property type="match status" value="1"/>
</dbReference>
<dbReference type="Gene3D" id="1.10.287.1480">
    <property type="match status" value="1"/>
</dbReference>
<dbReference type="HAMAP" id="MF_00537">
    <property type="entry name" value="Ribosomal_uS14_1"/>
    <property type="match status" value="1"/>
</dbReference>
<dbReference type="InterPro" id="IPR001209">
    <property type="entry name" value="Ribosomal_uS14"/>
</dbReference>
<dbReference type="InterPro" id="IPR023036">
    <property type="entry name" value="Ribosomal_uS14_bac/plastid"/>
</dbReference>
<dbReference type="NCBIfam" id="NF006477">
    <property type="entry name" value="PRK08881.1"/>
    <property type="match status" value="1"/>
</dbReference>
<dbReference type="PANTHER" id="PTHR19836">
    <property type="entry name" value="30S RIBOSOMAL PROTEIN S14"/>
    <property type="match status" value="1"/>
</dbReference>
<dbReference type="PANTHER" id="PTHR19836:SF23">
    <property type="entry name" value="SMALL RIBOSOMAL SUBUNIT PROTEIN US14A"/>
    <property type="match status" value="1"/>
</dbReference>
<dbReference type="Pfam" id="PF00253">
    <property type="entry name" value="Ribosomal_S14"/>
    <property type="match status" value="1"/>
</dbReference>
<dbReference type="SUPFAM" id="SSF57716">
    <property type="entry name" value="Glucocorticoid receptor-like (DNA-binding domain)"/>
    <property type="match status" value="1"/>
</dbReference>
<sequence length="101" mass="11501">MSKLSKIVKNEKRKVIVARYAARRQELKRIIAAPGTAPERRDEAQAALQKLPRDASPVRVRSRDVVDGRPRGILSRFGVSRIRFREMAHRGELPGITKSSW</sequence>
<name>RS14_TROW8</name>
<gene>
    <name evidence="1" type="primary">rpsN</name>
    <name type="ordered locus">TW127</name>
</gene>
<proteinExistence type="inferred from homology"/>
<keyword id="KW-0687">Ribonucleoprotein</keyword>
<keyword id="KW-0689">Ribosomal protein</keyword>
<keyword id="KW-0694">RNA-binding</keyword>
<keyword id="KW-0699">rRNA-binding</keyword>
<accession>Q83IB4</accession>
<comment type="function">
    <text evidence="1">Binds 16S rRNA, required for the assembly of 30S particles and may also be responsible for determining the conformation of the 16S rRNA at the A site.</text>
</comment>
<comment type="subunit">
    <text evidence="1">Part of the 30S ribosomal subunit. Contacts proteins S3 and S10.</text>
</comment>
<comment type="similarity">
    <text evidence="1">Belongs to the universal ribosomal protein uS14 family.</text>
</comment>
<evidence type="ECO:0000255" key="1">
    <source>
        <dbReference type="HAMAP-Rule" id="MF_00537"/>
    </source>
</evidence>
<evidence type="ECO:0000305" key="2"/>
<feature type="chain" id="PRO_1000128624" description="Small ribosomal subunit protein uS14">
    <location>
        <begin position="1"/>
        <end position="101"/>
    </location>
</feature>
<organism>
    <name type="scientific">Tropheryma whipplei (strain TW08/27)</name>
    <name type="common">Whipple's bacillus</name>
    <dbReference type="NCBI Taxonomy" id="218496"/>
    <lineage>
        <taxon>Bacteria</taxon>
        <taxon>Bacillati</taxon>
        <taxon>Actinomycetota</taxon>
        <taxon>Actinomycetes</taxon>
        <taxon>Micrococcales</taxon>
        <taxon>Tropherymataceae</taxon>
        <taxon>Tropheryma</taxon>
    </lineage>
</organism>
<protein>
    <recommendedName>
        <fullName evidence="1">Small ribosomal subunit protein uS14</fullName>
    </recommendedName>
    <alternativeName>
        <fullName evidence="2">30S ribosomal protein S14</fullName>
    </alternativeName>
</protein>